<organism>
    <name type="scientific">Mus musculus</name>
    <name type="common">Mouse</name>
    <dbReference type="NCBI Taxonomy" id="10090"/>
    <lineage>
        <taxon>Eukaryota</taxon>
        <taxon>Metazoa</taxon>
        <taxon>Chordata</taxon>
        <taxon>Craniata</taxon>
        <taxon>Vertebrata</taxon>
        <taxon>Euteleostomi</taxon>
        <taxon>Mammalia</taxon>
        <taxon>Eutheria</taxon>
        <taxon>Euarchontoglires</taxon>
        <taxon>Glires</taxon>
        <taxon>Rodentia</taxon>
        <taxon>Myomorpha</taxon>
        <taxon>Muroidea</taxon>
        <taxon>Muridae</taxon>
        <taxon>Murinae</taxon>
        <taxon>Mus</taxon>
        <taxon>Mus</taxon>
    </lineage>
</organism>
<proteinExistence type="evidence at transcript level"/>
<gene>
    <name type="primary">Asb10</name>
</gene>
<dbReference type="EMBL" id="AF398971">
    <property type="protein sequence ID" value="AAK97493.1"/>
    <property type="molecule type" value="mRNA"/>
</dbReference>
<dbReference type="EMBL" id="AK028538">
    <property type="protein sequence ID" value="BAC25997.1"/>
    <property type="molecule type" value="mRNA"/>
</dbReference>
<dbReference type="EMBL" id="AK052929">
    <property type="protein sequence ID" value="BAC35206.1"/>
    <property type="molecule type" value="mRNA"/>
</dbReference>
<dbReference type="EMBL" id="BC141311">
    <property type="protein sequence ID" value="AAI41312.1"/>
    <property type="molecule type" value="mRNA"/>
</dbReference>
<dbReference type="EMBL" id="BC141313">
    <property type="protein sequence ID" value="AAI41314.1"/>
    <property type="molecule type" value="mRNA"/>
</dbReference>
<dbReference type="CCDS" id="CCDS19124.1"/>
<dbReference type="RefSeq" id="NP_001297405.1">
    <property type="nucleotide sequence ID" value="NM_001310476.1"/>
</dbReference>
<dbReference type="RefSeq" id="NP_536692.1">
    <property type="nucleotide sequence ID" value="NM_080444.5"/>
</dbReference>
<dbReference type="SMR" id="Q91ZT7"/>
<dbReference type="FunCoup" id="Q91ZT7">
    <property type="interactions" value="388"/>
</dbReference>
<dbReference type="STRING" id="10090.ENSMUSP00000041539"/>
<dbReference type="PhosphoSitePlus" id="Q91ZT7"/>
<dbReference type="PaxDb" id="10090-ENSMUSP00000041539"/>
<dbReference type="ProteomicsDB" id="281914"/>
<dbReference type="Antibodypedia" id="32988">
    <property type="antibodies" value="136 antibodies from 19 providers"/>
</dbReference>
<dbReference type="DNASU" id="117590"/>
<dbReference type="Ensembl" id="ENSMUST00000048302.13">
    <property type="protein sequence ID" value="ENSMUSP00000041539.7"/>
    <property type="gene ID" value="ENSMUSG00000038204.14"/>
</dbReference>
<dbReference type="GeneID" id="117590"/>
<dbReference type="KEGG" id="mmu:117590"/>
<dbReference type="UCSC" id="uc008wry.1">
    <property type="organism name" value="mouse"/>
</dbReference>
<dbReference type="AGR" id="MGI:2152836"/>
<dbReference type="CTD" id="136371"/>
<dbReference type="MGI" id="MGI:2152836">
    <property type="gene designation" value="Asb10"/>
</dbReference>
<dbReference type="VEuPathDB" id="HostDB:ENSMUSG00000038204"/>
<dbReference type="eggNOG" id="KOG0504">
    <property type="taxonomic scope" value="Eukaryota"/>
</dbReference>
<dbReference type="GeneTree" id="ENSGT00940000158974"/>
<dbReference type="HOGENOM" id="CLU_035721_0_0_1"/>
<dbReference type="InParanoid" id="Q91ZT7"/>
<dbReference type="OMA" id="QGGEMRW"/>
<dbReference type="OrthoDB" id="366390at2759"/>
<dbReference type="PhylomeDB" id="Q91ZT7"/>
<dbReference type="TreeFam" id="TF323921"/>
<dbReference type="Reactome" id="R-MMU-8951664">
    <property type="pathway name" value="Neddylation"/>
</dbReference>
<dbReference type="Reactome" id="R-MMU-983168">
    <property type="pathway name" value="Antigen processing: Ubiquitination &amp; Proteasome degradation"/>
</dbReference>
<dbReference type="UniPathway" id="UPA00143"/>
<dbReference type="BioGRID-ORCS" id="117590">
    <property type="hits" value="2 hits in 78 CRISPR screens"/>
</dbReference>
<dbReference type="PRO" id="PR:Q91ZT7"/>
<dbReference type="Proteomes" id="UP000000589">
    <property type="component" value="Chromosome 5"/>
</dbReference>
<dbReference type="RNAct" id="Q91ZT7">
    <property type="molecule type" value="protein"/>
</dbReference>
<dbReference type="Bgee" id="ENSMUSG00000038204">
    <property type="expression patterns" value="Expressed in hindlimb stylopod muscle and 54 other cell types or tissues"/>
</dbReference>
<dbReference type="ExpressionAtlas" id="Q91ZT7">
    <property type="expression patterns" value="baseline and differential"/>
</dbReference>
<dbReference type="GO" id="GO:0005737">
    <property type="term" value="C:cytoplasm"/>
    <property type="evidence" value="ECO:0007669"/>
    <property type="project" value="UniProtKB-SubCell"/>
</dbReference>
<dbReference type="GO" id="GO:0005634">
    <property type="term" value="C:nucleus"/>
    <property type="evidence" value="ECO:0007669"/>
    <property type="project" value="UniProtKB-SubCell"/>
</dbReference>
<dbReference type="GO" id="GO:0035556">
    <property type="term" value="P:intracellular signal transduction"/>
    <property type="evidence" value="ECO:0007669"/>
    <property type="project" value="InterPro"/>
</dbReference>
<dbReference type="GO" id="GO:0016567">
    <property type="term" value="P:protein ubiquitination"/>
    <property type="evidence" value="ECO:0007669"/>
    <property type="project" value="UniProtKB-UniPathway"/>
</dbReference>
<dbReference type="CDD" id="cd03587">
    <property type="entry name" value="SOCS"/>
    <property type="match status" value="1"/>
</dbReference>
<dbReference type="FunFam" id="1.25.40.20:FF:000154">
    <property type="entry name" value="Ankyrin repeat and SOCS box containing 10"/>
    <property type="match status" value="1"/>
</dbReference>
<dbReference type="FunFam" id="1.25.40.20:FF:000228">
    <property type="entry name" value="Ankyrin repeat and SOCS box containing 10"/>
    <property type="match status" value="1"/>
</dbReference>
<dbReference type="FunFam" id="1.25.40.20:FF:000383">
    <property type="entry name" value="Ankyrin repeat and SOCS box protein 10"/>
    <property type="match status" value="1"/>
</dbReference>
<dbReference type="Gene3D" id="1.25.40.20">
    <property type="entry name" value="Ankyrin repeat-containing domain"/>
    <property type="match status" value="3"/>
</dbReference>
<dbReference type="Gene3D" id="1.10.750.20">
    <property type="entry name" value="SOCS box"/>
    <property type="match status" value="1"/>
</dbReference>
<dbReference type="InterPro" id="IPR002110">
    <property type="entry name" value="Ankyrin_rpt"/>
</dbReference>
<dbReference type="InterPro" id="IPR036770">
    <property type="entry name" value="Ankyrin_rpt-contain_sf"/>
</dbReference>
<dbReference type="InterPro" id="IPR001496">
    <property type="entry name" value="SOCS_box"/>
</dbReference>
<dbReference type="InterPro" id="IPR036036">
    <property type="entry name" value="SOCS_box-like_dom_sf"/>
</dbReference>
<dbReference type="PANTHER" id="PTHR24178">
    <property type="entry name" value="MOLTING PROTEIN MLT-4"/>
    <property type="match status" value="1"/>
</dbReference>
<dbReference type="Pfam" id="PF00023">
    <property type="entry name" value="Ank"/>
    <property type="match status" value="1"/>
</dbReference>
<dbReference type="Pfam" id="PF12796">
    <property type="entry name" value="Ank_2"/>
    <property type="match status" value="2"/>
</dbReference>
<dbReference type="Pfam" id="PF07525">
    <property type="entry name" value="SOCS_box"/>
    <property type="match status" value="1"/>
</dbReference>
<dbReference type="PRINTS" id="PR01415">
    <property type="entry name" value="ANKYRIN"/>
</dbReference>
<dbReference type="SMART" id="SM00248">
    <property type="entry name" value="ANK"/>
    <property type="match status" value="7"/>
</dbReference>
<dbReference type="SMART" id="SM00253">
    <property type="entry name" value="SOCS"/>
    <property type="match status" value="1"/>
</dbReference>
<dbReference type="SMART" id="SM00969">
    <property type="entry name" value="SOCS_box"/>
    <property type="match status" value="1"/>
</dbReference>
<dbReference type="SUPFAM" id="SSF48403">
    <property type="entry name" value="Ankyrin repeat"/>
    <property type="match status" value="1"/>
</dbReference>
<dbReference type="SUPFAM" id="SSF158235">
    <property type="entry name" value="SOCS box-like"/>
    <property type="match status" value="1"/>
</dbReference>
<dbReference type="PROSITE" id="PS50297">
    <property type="entry name" value="ANK_REP_REGION"/>
    <property type="match status" value="1"/>
</dbReference>
<dbReference type="PROSITE" id="PS50088">
    <property type="entry name" value="ANK_REPEAT"/>
    <property type="match status" value="5"/>
</dbReference>
<dbReference type="PROSITE" id="PS50225">
    <property type="entry name" value="SOCS"/>
    <property type="match status" value="1"/>
</dbReference>
<reference key="1">
    <citation type="journal article" date="2001" name="Mol. Cell. Biol.">
        <title>Functional analysis of Asb-1 using genetic modification in mice.</title>
        <authorList>
            <person name="Kile B.T."/>
            <person name="Metcalf D."/>
            <person name="Mifsud S."/>
            <person name="DiRago L."/>
            <person name="Nicola N.A."/>
            <person name="Hilton D.J."/>
            <person name="Alexander W.S."/>
        </authorList>
    </citation>
    <scope>NUCLEOTIDE SEQUENCE [MRNA]</scope>
</reference>
<reference key="2">
    <citation type="journal article" date="2005" name="Science">
        <title>The transcriptional landscape of the mammalian genome.</title>
        <authorList>
            <person name="Carninci P."/>
            <person name="Kasukawa T."/>
            <person name="Katayama S."/>
            <person name="Gough J."/>
            <person name="Frith M.C."/>
            <person name="Maeda N."/>
            <person name="Oyama R."/>
            <person name="Ravasi T."/>
            <person name="Lenhard B."/>
            <person name="Wells C."/>
            <person name="Kodzius R."/>
            <person name="Shimokawa K."/>
            <person name="Bajic V.B."/>
            <person name="Brenner S.E."/>
            <person name="Batalov S."/>
            <person name="Forrest A.R."/>
            <person name="Zavolan M."/>
            <person name="Davis M.J."/>
            <person name="Wilming L.G."/>
            <person name="Aidinis V."/>
            <person name="Allen J.E."/>
            <person name="Ambesi-Impiombato A."/>
            <person name="Apweiler R."/>
            <person name="Aturaliya R.N."/>
            <person name="Bailey T.L."/>
            <person name="Bansal M."/>
            <person name="Baxter L."/>
            <person name="Beisel K.W."/>
            <person name="Bersano T."/>
            <person name="Bono H."/>
            <person name="Chalk A.M."/>
            <person name="Chiu K.P."/>
            <person name="Choudhary V."/>
            <person name="Christoffels A."/>
            <person name="Clutterbuck D.R."/>
            <person name="Crowe M.L."/>
            <person name="Dalla E."/>
            <person name="Dalrymple B.P."/>
            <person name="de Bono B."/>
            <person name="Della Gatta G."/>
            <person name="di Bernardo D."/>
            <person name="Down T."/>
            <person name="Engstrom P."/>
            <person name="Fagiolini M."/>
            <person name="Faulkner G."/>
            <person name="Fletcher C.F."/>
            <person name="Fukushima T."/>
            <person name="Furuno M."/>
            <person name="Futaki S."/>
            <person name="Gariboldi M."/>
            <person name="Georgii-Hemming P."/>
            <person name="Gingeras T.R."/>
            <person name="Gojobori T."/>
            <person name="Green R.E."/>
            <person name="Gustincich S."/>
            <person name="Harbers M."/>
            <person name="Hayashi Y."/>
            <person name="Hensch T.K."/>
            <person name="Hirokawa N."/>
            <person name="Hill D."/>
            <person name="Huminiecki L."/>
            <person name="Iacono M."/>
            <person name="Ikeo K."/>
            <person name="Iwama A."/>
            <person name="Ishikawa T."/>
            <person name="Jakt M."/>
            <person name="Kanapin A."/>
            <person name="Katoh M."/>
            <person name="Kawasawa Y."/>
            <person name="Kelso J."/>
            <person name="Kitamura H."/>
            <person name="Kitano H."/>
            <person name="Kollias G."/>
            <person name="Krishnan S.P."/>
            <person name="Kruger A."/>
            <person name="Kummerfeld S.K."/>
            <person name="Kurochkin I.V."/>
            <person name="Lareau L.F."/>
            <person name="Lazarevic D."/>
            <person name="Lipovich L."/>
            <person name="Liu J."/>
            <person name="Liuni S."/>
            <person name="McWilliam S."/>
            <person name="Madan Babu M."/>
            <person name="Madera M."/>
            <person name="Marchionni L."/>
            <person name="Matsuda H."/>
            <person name="Matsuzawa S."/>
            <person name="Miki H."/>
            <person name="Mignone F."/>
            <person name="Miyake S."/>
            <person name="Morris K."/>
            <person name="Mottagui-Tabar S."/>
            <person name="Mulder N."/>
            <person name="Nakano N."/>
            <person name="Nakauchi H."/>
            <person name="Ng P."/>
            <person name="Nilsson R."/>
            <person name="Nishiguchi S."/>
            <person name="Nishikawa S."/>
            <person name="Nori F."/>
            <person name="Ohara O."/>
            <person name="Okazaki Y."/>
            <person name="Orlando V."/>
            <person name="Pang K.C."/>
            <person name="Pavan W.J."/>
            <person name="Pavesi G."/>
            <person name="Pesole G."/>
            <person name="Petrovsky N."/>
            <person name="Piazza S."/>
            <person name="Reed J."/>
            <person name="Reid J.F."/>
            <person name="Ring B.Z."/>
            <person name="Ringwald M."/>
            <person name="Rost B."/>
            <person name="Ruan Y."/>
            <person name="Salzberg S.L."/>
            <person name="Sandelin A."/>
            <person name="Schneider C."/>
            <person name="Schoenbach C."/>
            <person name="Sekiguchi K."/>
            <person name="Semple C.A."/>
            <person name="Seno S."/>
            <person name="Sessa L."/>
            <person name="Sheng Y."/>
            <person name="Shibata Y."/>
            <person name="Shimada H."/>
            <person name="Shimada K."/>
            <person name="Silva D."/>
            <person name="Sinclair B."/>
            <person name="Sperling S."/>
            <person name="Stupka E."/>
            <person name="Sugiura K."/>
            <person name="Sultana R."/>
            <person name="Takenaka Y."/>
            <person name="Taki K."/>
            <person name="Tammoja K."/>
            <person name="Tan S.L."/>
            <person name="Tang S."/>
            <person name="Taylor M.S."/>
            <person name="Tegner J."/>
            <person name="Teichmann S.A."/>
            <person name="Ueda H.R."/>
            <person name="van Nimwegen E."/>
            <person name="Verardo R."/>
            <person name="Wei C.L."/>
            <person name="Yagi K."/>
            <person name="Yamanishi H."/>
            <person name="Zabarovsky E."/>
            <person name="Zhu S."/>
            <person name="Zimmer A."/>
            <person name="Hide W."/>
            <person name="Bult C."/>
            <person name="Grimmond S.M."/>
            <person name="Teasdale R.D."/>
            <person name="Liu E.T."/>
            <person name="Brusic V."/>
            <person name="Quackenbush J."/>
            <person name="Wahlestedt C."/>
            <person name="Mattick J.S."/>
            <person name="Hume D.A."/>
            <person name="Kai C."/>
            <person name="Sasaki D."/>
            <person name="Tomaru Y."/>
            <person name="Fukuda S."/>
            <person name="Kanamori-Katayama M."/>
            <person name="Suzuki M."/>
            <person name="Aoki J."/>
            <person name="Arakawa T."/>
            <person name="Iida J."/>
            <person name="Imamura K."/>
            <person name="Itoh M."/>
            <person name="Kato T."/>
            <person name="Kawaji H."/>
            <person name="Kawagashira N."/>
            <person name="Kawashima T."/>
            <person name="Kojima M."/>
            <person name="Kondo S."/>
            <person name="Konno H."/>
            <person name="Nakano K."/>
            <person name="Ninomiya N."/>
            <person name="Nishio T."/>
            <person name="Okada M."/>
            <person name="Plessy C."/>
            <person name="Shibata K."/>
            <person name="Shiraki T."/>
            <person name="Suzuki S."/>
            <person name="Tagami M."/>
            <person name="Waki K."/>
            <person name="Watahiki A."/>
            <person name="Okamura-Oho Y."/>
            <person name="Suzuki H."/>
            <person name="Kawai J."/>
            <person name="Hayashizaki Y."/>
        </authorList>
    </citation>
    <scope>NUCLEOTIDE SEQUENCE [LARGE SCALE MRNA]</scope>
    <source>
        <strain>C57BL/6J</strain>
        <tissue>Heart</tissue>
        <tissue>Skin</tissue>
    </source>
</reference>
<reference key="3">
    <citation type="journal article" date="2004" name="Genome Res.">
        <title>The status, quality, and expansion of the NIH full-length cDNA project: the Mammalian Gene Collection (MGC).</title>
        <authorList>
            <consortium name="The MGC Project Team"/>
        </authorList>
    </citation>
    <scope>NUCLEOTIDE SEQUENCE [LARGE SCALE MRNA]</scope>
    <source>
        <tissue>Brain</tissue>
    </source>
</reference>
<protein>
    <recommendedName>
        <fullName>Ankyrin repeat and SOCS box protein 10</fullName>
        <shortName>ASB-10</shortName>
    </recommendedName>
</protein>
<sequence>MLMSWSPEECRDQGEPQGDRYSLCAKLVEKPDRGSEEHLEPGLGPIIIRSASGPTLAFWQAVLVGDVGSVSRILSDSSTGLAPDSIFDTSDPERWRDYRFNIRALRLWSLTYEEELTTPLHVAASRGHTEVLELLLRRRAKPDSAPGGRTALHEACSAGHAACVRVLLVAGADPNTLDQDGKRPLHLCRGPGILECVELLLKFGAQVDGRTEDEEETPLHIAARLGHVELADLLLRWGACPDVRNSEGWTPLLAACDIRCQSPKDAEATTNRCFQLCRLLLSVGADADAANQDKQRPLHLACRHGHSAVVQLLLSCGVNANAMDYGGHTPLHCALLGPTTAVAHSPEHTVRDLLNHGAVRVWPGALPKVLDRWCMSPRTIEVLMNTYRVVQLPEEAKGLVPPEILQKYHGFYSSLFALVRQPRSLQHLCRCALRSHLEGCLPHALPRLPLPPRMLRFLQLDFEDLLY</sequence>
<comment type="function">
    <text evidence="1">May be a substrate-recognition component of a SCF-like ECS (Elongin-Cullin-SOCS-box protein) E3 ubiquitin-protein ligase complex which mediates the ubiquitination and subsequent proteasomal degradation of target proteins.</text>
</comment>
<comment type="pathway">
    <text>Protein modification; protein ubiquitination.</text>
</comment>
<comment type="subcellular location">
    <subcellularLocation>
        <location evidence="1">Nucleus</location>
    </subcellularLocation>
    <subcellularLocation>
        <location evidence="1">Cytoplasm</location>
    </subcellularLocation>
</comment>
<comment type="domain">
    <text evidence="1">The SOCS box domain mediates the interaction with the Elongin BC complex, an adapter module in different E3 ubiquitin-protein ligase complexes.</text>
</comment>
<comment type="similarity">
    <text evidence="3">Belongs to the ankyrin SOCS box (ASB) family.</text>
</comment>
<evidence type="ECO:0000250" key="1"/>
<evidence type="ECO:0000255" key="2">
    <source>
        <dbReference type="PROSITE-ProRule" id="PRU00194"/>
    </source>
</evidence>
<evidence type="ECO:0000305" key="3"/>
<feature type="chain" id="PRO_0000066943" description="Ankyrin repeat and SOCS box protein 10">
    <location>
        <begin position="1"/>
        <end position="467"/>
    </location>
</feature>
<feature type="repeat" description="ANK 1">
    <location>
        <begin position="115"/>
        <end position="144"/>
    </location>
</feature>
<feature type="repeat" description="ANK 2">
    <location>
        <begin position="147"/>
        <end position="176"/>
    </location>
</feature>
<feature type="repeat" description="ANK 3">
    <location>
        <begin position="180"/>
        <end position="209"/>
    </location>
</feature>
<feature type="repeat" description="ANK 4">
    <location>
        <begin position="214"/>
        <end position="243"/>
    </location>
</feature>
<feature type="repeat" description="ANK 5">
    <location>
        <begin position="247"/>
        <end position="289"/>
    </location>
</feature>
<feature type="repeat" description="ANK 6">
    <location>
        <begin position="293"/>
        <end position="322"/>
    </location>
</feature>
<feature type="repeat" description="ANK 7">
    <location>
        <begin position="326"/>
        <end position="361"/>
    </location>
</feature>
<feature type="domain" description="SOCS box" evidence="2">
    <location>
        <begin position="412"/>
        <end position="467"/>
    </location>
</feature>
<accession>Q91ZT7</accession>
<accession>B2RUP6</accession>
<keyword id="KW-0040">ANK repeat</keyword>
<keyword id="KW-0963">Cytoplasm</keyword>
<keyword id="KW-0539">Nucleus</keyword>
<keyword id="KW-1185">Reference proteome</keyword>
<keyword id="KW-0677">Repeat</keyword>
<keyword id="KW-0833">Ubl conjugation pathway</keyword>
<name>ASB10_MOUSE</name>